<feature type="chain" id="PRO_0000059357" description="Disulfide bond formation protein B">
    <location>
        <begin position="1"/>
        <end position="176"/>
    </location>
</feature>
<feature type="topological domain" description="Cytoplasmic" evidence="2">
    <location>
        <begin position="1"/>
        <end position="14"/>
    </location>
</feature>
<feature type="transmembrane region" description="Helical" evidence="2">
    <location>
        <begin position="15"/>
        <end position="31"/>
    </location>
</feature>
<feature type="topological domain" description="Periplasmic" evidence="2">
    <location>
        <begin position="32"/>
        <end position="49"/>
    </location>
</feature>
<feature type="transmembrane region" description="Helical" evidence="2">
    <location>
        <begin position="50"/>
        <end position="65"/>
    </location>
</feature>
<feature type="topological domain" description="Cytoplasmic" evidence="2">
    <location>
        <begin position="66"/>
        <end position="71"/>
    </location>
</feature>
<feature type="transmembrane region" description="Helical" evidence="2">
    <location>
        <begin position="72"/>
        <end position="89"/>
    </location>
</feature>
<feature type="topological domain" description="Periplasmic" evidence="2">
    <location>
        <begin position="90"/>
        <end position="144"/>
    </location>
</feature>
<feature type="transmembrane region" description="Helical" evidence="2">
    <location>
        <begin position="145"/>
        <end position="163"/>
    </location>
</feature>
<feature type="topological domain" description="Cytoplasmic" evidence="2">
    <location>
        <begin position="164"/>
        <end position="176"/>
    </location>
</feature>
<feature type="disulfide bond" description="Redox-active" evidence="2">
    <location>
        <begin position="41"/>
        <end position="44"/>
    </location>
</feature>
<feature type="disulfide bond" description="Redox-active" evidence="2">
    <location>
        <begin position="104"/>
        <end position="130"/>
    </location>
</feature>
<accession>P63994</accession>
<accession>Q8XG65</accession>
<reference key="1">
    <citation type="journal article" date="2001" name="Nature">
        <title>Complete genome sequence of a multiple drug resistant Salmonella enterica serovar Typhi CT18.</title>
        <authorList>
            <person name="Parkhill J."/>
            <person name="Dougan G."/>
            <person name="James K.D."/>
            <person name="Thomson N.R."/>
            <person name="Pickard D."/>
            <person name="Wain J."/>
            <person name="Churcher C.M."/>
            <person name="Mungall K.L."/>
            <person name="Bentley S.D."/>
            <person name="Holden M.T.G."/>
            <person name="Sebaihia M."/>
            <person name="Baker S."/>
            <person name="Basham D."/>
            <person name="Brooks K."/>
            <person name="Chillingworth T."/>
            <person name="Connerton P."/>
            <person name="Cronin A."/>
            <person name="Davis P."/>
            <person name="Davies R.M."/>
            <person name="Dowd L."/>
            <person name="White N."/>
            <person name="Farrar J."/>
            <person name="Feltwell T."/>
            <person name="Hamlin N."/>
            <person name="Haque A."/>
            <person name="Hien T.T."/>
            <person name="Holroyd S."/>
            <person name="Jagels K."/>
            <person name="Krogh A."/>
            <person name="Larsen T.S."/>
            <person name="Leather S."/>
            <person name="Moule S."/>
            <person name="O'Gaora P."/>
            <person name="Parry C."/>
            <person name="Quail M.A."/>
            <person name="Rutherford K.M."/>
            <person name="Simmonds M."/>
            <person name="Skelton J."/>
            <person name="Stevens K."/>
            <person name="Whitehead S."/>
            <person name="Barrell B.G."/>
        </authorList>
    </citation>
    <scope>NUCLEOTIDE SEQUENCE [LARGE SCALE GENOMIC DNA]</scope>
    <source>
        <strain>CT18</strain>
    </source>
</reference>
<reference key="2">
    <citation type="journal article" date="2003" name="J. Bacteriol.">
        <title>Comparative genomics of Salmonella enterica serovar Typhi strains Ty2 and CT18.</title>
        <authorList>
            <person name="Deng W."/>
            <person name="Liou S.-R."/>
            <person name="Plunkett G. III"/>
            <person name="Mayhew G.F."/>
            <person name="Rose D.J."/>
            <person name="Burland V."/>
            <person name="Kodoyianni V."/>
            <person name="Schwartz D.C."/>
            <person name="Blattner F.R."/>
        </authorList>
    </citation>
    <scope>NUCLEOTIDE SEQUENCE [LARGE SCALE GENOMIC DNA]</scope>
    <source>
        <strain>ATCC 700931 / Ty2</strain>
    </source>
</reference>
<name>DSBB_SALTI</name>
<protein>
    <recommendedName>
        <fullName evidence="2">Disulfide bond formation protein B</fullName>
    </recommendedName>
    <alternativeName>
        <fullName evidence="2">Disulfide oxidoreductase</fullName>
    </alternativeName>
</protein>
<sequence length="176" mass="20063">MLRFLNQCSRGRGAWLLMAFTALALEMVALWFQHVMLLKPCVLCIYERCALFGVMGAGLVGAIAPKTPLRYVAMVIWIYSAWRGLQLAYEHTMIQLHPSPFMTCDFMARFPDWLPLGKWLPQVFVASGDCAERQWSFLTLEMPQWLLGIFAAYLVVAIAVVIAQAFKPKKRDLFGR</sequence>
<keyword id="KW-0997">Cell inner membrane</keyword>
<keyword id="KW-1003">Cell membrane</keyword>
<keyword id="KW-0143">Chaperone</keyword>
<keyword id="KW-1015">Disulfide bond</keyword>
<keyword id="KW-0249">Electron transport</keyword>
<keyword id="KW-0472">Membrane</keyword>
<keyword id="KW-0560">Oxidoreductase</keyword>
<keyword id="KW-0676">Redox-active center</keyword>
<keyword id="KW-0812">Transmembrane</keyword>
<keyword id="KW-1133">Transmembrane helix</keyword>
<keyword id="KW-0813">Transport</keyword>
<organism>
    <name type="scientific">Salmonella typhi</name>
    <dbReference type="NCBI Taxonomy" id="90370"/>
    <lineage>
        <taxon>Bacteria</taxon>
        <taxon>Pseudomonadati</taxon>
        <taxon>Pseudomonadota</taxon>
        <taxon>Gammaproteobacteria</taxon>
        <taxon>Enterobacterales</taxon>
        <taxon>Enterobacteriaceae</taxon>
        <taxon>Salmonella</taxon>
    </lineage>
</organism>
<dbReference type="EMBL" id="AL513382">
    <property type="protein sequence ID" value="CAD05490.1"/>
    <property type="molecule type" value="Genomic_DNA"/>
</dbReference>
<dbReference type="EMBL" id="AE014613">
    <property type="protein sequence ID" value="AAO68736.1"/>
    <property type="molecule type" value="Genomic_DNA"/>
</dbReference>
<dbReference type="RefSeq" id="NP_456314.1">
    <property type="nucleotide sequence ID" value="NC_003198.1"/>
</dbReference>
<dbReference type="RefSeq" id="WP_000943475.1">
    <property type="nucleotide sequence ID" value="NZ_WSUR01000004.1"/>
</dbReference>
<dbReference type="SMR" id="P63994"/>
<dbReference type="STRING" id="220341.gene:17585855"/>
<dbReference type="KEGG" id="stt:t1070"/>
<dbReference type="KEGG" id="sty:STY1936"/>
<dbReference type="PATRIC" id="fig|220341.7.peg.1953"/>
<dbReference type="eggNOG" id="COG1495">
    <property type="taxonomic scope" value="Bacteria"/>
</dbReference>
<dbReference type="HOGENOM" id="CLU_098660_2_0_6"/>
<dbReference type="OMA" id="GGALYMQ"/>
<dbReference type="OrthoDB" id="3711263at2"/>
<dbReference type="Proteomes" id="UP000000541">
    <property type="component" value="Chromosome"/>
</dbReference>
<dbReference type="Proteomes" id="UP000002670">
    <property type="component" value="Chromosome"/>
</dbReference>
<dbReference type="GO" id="GO:0005886">
    <property type="term" value="C:plasma membrane"/>
    <property type="evidence" value="ECO:0007669"/>
    <property type="project" value="UniProtKB-SubCell"/>
</dbReference>
<dbReference type="GO" id="GO:0009055">
    <property type="term" value="F:electron transfer activity"/>
    <property type="evidence" value="ECO:0007669"/>
    <property type="project" value="UniProtKB-UniRule"/>
</dbReference>
<dbReference type="GO" id="GO:0015035">
    <property type="term" value="F:protein-disulfide reductase activity"/>
    <property type="evidence" value="ECO:0007669"/>
    <property type="project" value="UniProtKB-UniRule"/>
</dbReference>
<dbReference type="GO" id="GO:0006457">
    <property type="term" value="P:protein folding"/>
    <property type="evidence" value="ECO:0007669"/>
    <property type="project" value="InterPro"/>
</dbReference>
<dbReference type="FunFam" id="1.20.1550.10:FF:000001">
    <property type="entry name" value="Disulfide bond formation protein B"/>
    <property type="match status" value="1"/>
</dbReference>
<dbReference type="Gene3D" id="1.20.1550.10">
    <property type="entry name" value="DsbB-like"/>
    <property type="match status" value="1"/>
</dbReference>
<dbReference type="HAMAP" id="MF_00286">
    <property type="entry name" value="DsbB"/>
    <property type="match status" value="1"/>
</dbReference>
<dbReference type="InterPro" id="IPR003752">
    <property type="entry name" value="DiS_bond_form_DsbB/BdbC"/>
</dbReference>
<dbReference type="InterPro" id="IPR022920">
    <property type="entry name" value="Disulphide_bond_form_DsbB"/>
</dbReference>
<dbReference type="InterPro" id="IPR050183">
    <property type="entry name" value="DsbB"/>
</dbReference>
<dbReference type="InterPro" id="IPR023380">
    <property type="entry name" value="DsbB-like_sf"/>
</dbReference>
<dbReference type="NCBIfam" id="NF002485">
    <property type="entry name" value="PRK01749.1"/>
    <property type="match status" value="1"/>
</dbReference>
<dbReference type="PANTHER" id="PTHR36570">
    <property type="entry name" value="DISULFIDE BOND FORMATION PROTEIN B"/>
    <property type="match status" value="1"/>
</dbReference>
<dbReference type="PANTHER" id="PTHR36570:SF2">
    <property type="entry name" value="DISULFIDE BOND FORMATION PROTEIN B"/>
    <property type="match status" value="1"/>
</dbReference>
<dbReference type="Pfam" id="PF02600">
    <property type="entry name" value="DsbB"/>
    <property type="match status" value="1"/>
</dbReference>
<dbReference type="SUPFAM" id="SSF158442">
    <property type="entry name" value="DsbB-like"/>
    <property type="match status" value="1"/>
</dbReference>
<comment type="function">
    <text evidence="1">Required for disulfide bond formation in some periplasmic proteins such as PhoA or OmpA. Acts by oxidizing the DsbA protein (By similarity).</text>
</comment>
<comment type="subcellular location">
    <subcellularLocation>
        <location evidence="2">Cell inner membrane</location>
        <topology evidence="2">Multi-pass membrane protein</topology>
    </subcellularLocation>
</comment>
<comment type="similarity">
    <text evidence="2">Belongs to the DsbB family.</text>
</comment>
<gene>
    <name evidence="2" type="primary">dsbB</name>
    <name type="ordered locus">STY1936</name>
    <name type="ordered locus">t1070</name>
</gene>
<proteinExistence type="inferred from homology"/>
<evidence type="ECO:0000250" key="1"/>
<evidence type="ECO:0000255" key="2">
    <source>
        <dbReference type="HAMAP-Rule" id="MF_00286"/>
    </source>
</evidence>